<name>BTUB_YERPN</name>
<keyword id="KW-0106">Calcium</keyword>
<keyword id="KW-0998">Cell outer membrane</keyword>
<keyword id="KW-0406">Ion transport</keyword>
<keyword id="KW-0472">Membrane</keyword>
<keyword id="KW-0479">Metal-binding</keyword>
<keyword id="KW-0626">Porin</keyword>
<keyword id="KW-0732">Signal</keyword>
<keyword id="KW-0798">TonB box</keyword>
<keyword id="KW-0812">Transmembrane</keyword>
<keyword id="KW-1134">Transmembrane beta strand</keyword>
<keyword id="KW-0813">Transport</keyword>
<protein>
    <recommendedName>
        <fullName evidence="1">Vitamin B12 transporter BtuB</fullName>
    </recommendedName>
    <alternativeName>
        <fullName evidence="1">Cobalamin receptor</fullName>
    </alternativeName>
    <alternativeName>
        <fullName evidence="1">Outer membrane cobalamin translocator</fullName>
    </alternativeName>
</protein>
<accession>Q1CNP0</accession>
<accession>D1Q375</accession>
<dbReference type="EMBL" id="CP000305">
    <property type="protein sequence ID" value="ABG16390.1"/>
    <property type="status" value="ALT_INIT"/>
    <property type="molecule type" value="Genomic_DNA"/>
</dbReference>
<dbReference type="EMBL" id="ACNQ01000019">
    <property type="protein sequence ID" value="EEO74978.1"/>
    <property type="molecule type" value="Genomic_DNA"/>
</dbReference>
<dbReference type="RefSeq" id="WP_002228170.1">
    <property type="nucleotide sequence ID" value="NZ_ACNQ01000019.1"/>
</dbReference>
<dbReference type="SMR" id="Q1CNP0"/>
<dbReference type="GeneID" id="57974790"/>
<dbReference type="KEGG" id="ypn:YPN_0057"/>
<dbReference type="HOGENOM" id="CLU_008287_18_5_6"/>
<dbReference type="Proteomes" id="UP000008936">
    <property type="component" value="Chromosome"/>
</dbReference>
<dbReference type="GO" id="GO:0009279">
    <property type="term" value="C:cell outer membrane"/>
    <property type="evidence" value="ECO:0007669"/>
    <property type="project" value="UniProtKB-SubCell"/>
</dbReference>
<dbReference type="GO" id="GO:0046930">
    <property type="term" value="C:pore complex"/>
    <property type="evidence" value="ECO:0007669"/>
    <property type="project" value="UniProtKB-KW"/>
</dbReference>
<dbReference type="GO" id="GO:0015420">
    <property type="term" value="F:ABC-type vitamin B12 transporter activity"/>
    <property type="evidence" value="ECO:0007669"/>
    <property type="project" value="InterPro"/>
</dbReference>
<dbReference type="GO" id="GO:0046872">
    <property type="term" value="F:metal ion binding"/>
    <property type="evidence" value="ECO:0007669"/>
    <property type="project" value="UniProtKB-KW"/>
</dbReference>
<dbReference type="GO" id="GO:0015288">
    <property type="term" value="F:porin activity"/>
    <property type="evidence" value="ECO:0007669"/>
    <property type="project" value="UniProtKB-KW"/>
</dbReference>
<dbReference type="GO" id="GO:0006811">
    <property type="term" value="P:monoatomic ion transport"/>
    <property type="evidence" value="ECO:0007669"/>
    <property type="project" value="UniProtKB-KW"/>
</dbReference>
<dbReference type="CDD" id="cd01347">
    <property type="entry name" value="ligand_gated_channel"/>
    <property type="match status" value="1"/>
</dbReference>
<dbReference type="FunFam" id="2.170.130.10:FF:000002">
    <property type="entry name" value="Vitamin B12 transporter BtuB"/>
    <property type="match status" value="1"/>
</dbReference>
<dbReference type="Gene3D" id="2.40.170.20">
    <property type="entry name" value="TonB-dependent receptor, beta-barrel domain"/>
    <property type="match status" value="1"/>
</dbReference>
<dbReference type="Gene3D" id="2.170.130.10">
    <property type="entry name" value="TonB-dependent receptor, plug domain"/>
    <property type="match status" value="1"/>
</dbReference>
<dbReference type="HAMAP" id="MF_01531">
    <property type="entry name" value="BtuB"/>
    <property type="match status" value="1"/>
</dbReference>
<dbReference type="InterPro" id="IPR010101">
    <property type="entry name" value="B12_transptr_BtuB"/>
</dbReference>
<dbReference type="InterPro" id="IPR012910">
    <property type="entry name" value="Plug_dom"/>
</dbReference>
<dbReference type="InterPro" id="IPR037066">
    <property type="entry name" value="Plug_dom_sf"/>
</dbReference>
<dbReference type="InterPro" id="IPR039426">
    <property type="entry name" value="TonB-dep_rcpt-like"/>
</dbReference>
<dbReference type="InterPro" id="IPR000531">
    <property type="entry name" value="TonB-dep_rcpt_b-brl"/>
</dbReference>
<dbReference type="InterPro" id="IPR036942">
    <property type="entry name" value="TonB_rcpt_b-brl_sf"/>
</dbReference>
<dbReference type="InterPro" id="IPR010917">
    <property type="entry name" value="TonB_rcpt_CS"/>
</dbReference>
<dbReference type="NCBIfam" id="NF007926">
    <property type="entry name" value="PRK10641.1"/>
    <property type="match status" value="1"/>
</dbReference>
<dbReference type="NCBIfam" id="TIGR01779">
    <property type="entry name" value="TonB-B12"/>
    <property type="match status" value="1"/>
</dbReference>
<dbReference type="PANTHER" id="PTHR30069:SF53">
    <property type="entry name" value="COLICIN I RECEPTOR-RELATED"/>
    <property type="match status" value="1"/>
</dbReference>
<dbReference type="PANTHER" id="PTHR30069">
    <property type="entry name" value="TONB-DEPENDENT OUTER MEMBRANE RECEPTOR"/>
    <property type="match status" value="1"/>
</dbReference>
<dbReference type="Pfam" id="PF07715">
    <property type="entry name" value="Plug"/>
    <property type="match status" value="1"/>
</dbReference>
<dbReference type="Pfam" id="PF00593">
    <property type="entry name" value="TonB_dep_Rec_b-barrel"/>
    <property type="match status" value="1"/>
</dbReference>
<dbReference type="SUPFAM" id="SSF56935">
    <property type="entry name" value="Porins"/>
    <property type="match status" value="1"/>
</dbReference>
<dbReference type="PROSITE" id="PS01156">
    <property type="entry name" value="TONB_DEPENDENT_REC_2"/>
    <property type="match status" value="1"/>
</dbReference>
<dbReference type="PROSITE" id="PS52016">
    <property type="entry name" value="TONB_DEPENDENT_REC_3"/>
    <property type="match status" value="1"/>
</dbReference>
<gene>
    <name evidence="1" type="primary">btuB</name>
    <name type="ordered locus">YPN_0057</name>
    <name type="ORF">YP516_4595</name>
</gene>
<reference key="1">
    <citation type="journal article" date="2006" name="J. Bacteriol.">
        <title>Complete genome sequence of Yersinia pestis strains Antiqua and Nepal516: evidence of gene reduction in an emerging pathogen.</title>
        <authorList>
            <person name="Chain P.S.G."/>
            <person name="Hu P."/>
            <person name="Malfatti S.A."/>
            <person name="Radnedge L."/>
            <person name="Larimer F."/>
            <person name="Vergez L.M."/>
            <person name="Worsham P."/>
            <person name="Chu M.C."/>
            <person name="Andersen G.L."/>
        </authorList>
    </citation>
    <scope>NUCLEOTIDE SEQUENCE [LARGE SCALE GENOMIC DNA]</scope>
    <source>
        <strain>Nepal516</strain>
    </source>
</reference>
<reference key="2">
    <citation type="submission" date="2009-04" db="EMBL/GenBank/DDBJ databases">
        <title>Yersinia pestis Nepal516A whole genome shotgun sequencing project.</title>
        <authorList>
            <person name="Plunkett G. III"/>
            <person name="Anderson B.D."/>
            <person name="Baumler D.J."/>
            <person name="Burland V."/>
            <person name="Cabot E.L."/>
            <person name="Glasner J.D."/>
            <person name="Mau B."/>
            <person name="Neeno-Eckwall E."/>
            <person name="Perna N.T."/>
            <person name="Munk A.C."/>
            <person name="Tapia R."/>
            <person name="Green L.D."/>
            <person name="Rogers Y.C."/>
            <person name="Detter J.C."/>
            <person name="Bruce D.C."/>
            <person name="Brettin T.S."/>
        </authorList>
    </citation>
    <scope>NUCLEOTIDE SEQUENCE [LARGE SCALE GENOMIC DNA]</scope>
    <source>
        <strain>Nepal516</strain>
    </source>
</reference>
<organism>
    <name type="scientific">Yersinia pestis bv. Antiqua (strain Nepal516)</name>
    <dbReference type="NCBI Taxonomy" id="377628"/>
    <lineage>
        <taxon>Bacteria</taxon>
        <taxon>Pseudomonadati</taxon>
        <taxon>Pseudomonadota</taxon>
        <taxon>Gammaproteobacteria</taxon>
        <taxon>Enterobacterales</taxon>
        <taxon>Yersiniaceae</taxon>
        <taxon>Yersinia</taxon>
    </lineage>
</organism>
<feature type="signal peptide" evidence="1">
    <location>
        <begin position="1"/>
        <end position="21"/>
    </location>
</feature>
<feature type="chain" id="PRO_5000115035" description="Vitamin B12 transporter BtuB">
    <location>
        <begin position="22"/>
        <end position="625"/>
    </location>
</feature>
<feature type="transmembrane region" description="Beta stranded" evidence="1">
    <location>
        <begin position="163"/>
        <end position="170"/>
    </location>
</feature>
<feature type="transmembrane region" description="Beta stranded" evidence="1">
    <location>
        <begin position="174"/>
        <end position="183"/>
    </location>
</feature>
<feature type="transmembrane region" description="Beta stranded" evidence="1">
    <location>
        <begin position="189"/>
        <end position="200"/>
    </location>
</feature>
<feature type="transmembrane region" description="Beta stranded" evidence="1">
    <location>
        <begin position="223"/>
        <end position="233"/>
    </location>
</feature>
<feature type="transmembrane region" description="Beta stranded" evidence="1">
    <location>
        <begin position="238"/>
        <end position="254"/>
    </location>
</feature>
<feature type="transmembrane region" description="Beta stranded" evidence="1">
    <location>
        <begin position="271"/>
        <end position="285"/>
    </location>
</feature>
<feature type="transmembrane region" description="Beta stranded" evidence="1">
    <location>
        <begin position="287"/>
        <end position="304"/>
    </location>
</feature>
<feature type="transmembrane region" description="Beta stranded" evidence="1">
    <location>
        <begin position="317"/>
        <end position="333"/>
    </location>
</feature>
<feature type="transmembrane region" description="Beta stranded" evidence="1">
    <location>
        <begin position="336"/>
        <end position="345"/>
    </location>
</feature>
<feature type="transmembrane region" description="Beta stranded" evidence="1">
    <location>
        <begin position="363"/>
        <end position="379"/>
    </location>
</feature>
<feature type="transmembrane region" description="Beta stranded" evidence="1">
    <location>
        <begin position="381"/>
        <end position="391"/>
    </location>
</feature>
<feature type="transmembrane region" description="Beta stranded" evidence="1">
    <location>
        <begin position="395"/>
        <end position="410"/>
    </location>
</feature>
<feature type="transmembrane region" description="Beta stranded" evidence="1">
    <location>
        <begin position="413"/>
        <end position="427"/>
    </location>
</feature>
<feature type="transmembrane region" description="Beta stranded" evidence="1">
    <location>
        <begin position="445"/>
        <end position="454"/>
    </location>
</feature>
<feature type="transmembrane region" description="Beta stranded" evidence="1">
    <location>
        <begin position="460"/>
        <end position="469"/>
    </location>
</feature>
<feature type="transmembrane region" description="Beta stranded" evidence="1">
    <location>
        <begin position="484"/>
        <end position="501"/>
    </location>
</feature>
<feature type="transmembrane region" description="Beta stranded" evidence="1">
    <location>
        <begin position="505"/>
        <end position="520"/>
    </location>
</feature>
<feature type="transmembrane region" description="Beta stranded" evidence="1">
    <location>
        <begin position="528"/>
        <end position="540"/>
    </location>
</feature>
<feature type="transmembrane region" description="Beta stranded" evidence="1">
    <location>
        <begin position="546"/>
        <end position="561"/>
    </location>
</feature>
<feature type="transmembrane region" description="Beta stranded" evidence="1">
    <location>
        <begin position="569"/>
        <end position="583"/>
    </location>
</feature>
<feature type="transmembrane region" description="Beta stranded" evidence="1">
    <location>
        <begin position="596"/>
        <end position="607"/>
    </location>
</feature>
<feature type="transmembrane region" description="Beta stranded" evidence="1">
    <location>
        <begin position="613"/>
        <end position="625"/>
    </location>
</feature>
<feature type="domain" description="TBDR plug" evidence="2">
    <location>
        <begin position="43"/>
        <end position="157"/>
    </location>
</feature>
<feature type="domain" description="TBDR beta-barrel" evidence="2">
    <location>
        <begin position="160"/>
        <end position="625"/>
    </location>
</feature>
<feature type="short sequence motif" description="TonB box">
    <location>
        <begin position="31"/>
        <end position="38"/>
    </location>
</feature>
<feature type="short sequence motif" description="TonB C-terminal box">
    <location>
        <begin position="608"/>
        <end position="625"/>
    </location>
</feature>
<feature type="binding site" evidence="1">
    <location>
        <position position="90"/>
    </location>
    <ligand>
        <name>cyanocob(III)alamin</name>
        <dbReference type="ChEBI" id="CHEBI:17439"/>
    </ligand>
</feature>
<feature type="binding site" evidence="1">
    <location>
        <position position="97"/>
    </location>
    <ligand>
        <name>cyanocob(III)alamin</name>
        <dbReference type="ChEBI" id="CHEBI:17439"/>
    </ligand>
</feature>
<feature type="binding site" evidence="1">
    <location>
        <begin position="115"/>
        <end position="116"/>
    </location>
    <ligand>
        <name>cyanocob(III)alamin</name>
        <dbReference type="ChEBI" id="CHEBI:17439"/>
    </ligand>
</feature>
<feature type="binding site" evidence="1">
    <location>
        <position position="204"/>
    </location>
    <ligand>
        <name>Ca(2+)</name>
        <dbReference type="ChEBI" id="CHEBI:29108"/>
        <label>1</label>
    </ligand>
</feature>
<feature type="binding site" evidence="1">
    <location>
        <position position="217"/>
    </location>
    <ligand>
        <name>Ca(2+)</name>
        <dbReference type="ChEBI" id="CHEBI:29108"/>
        <label>1</label>
    </ligand>
</feature>
<feature type="binding site" evidence="1">
    <location>
        <position position="219"/>
    </location>
    <ligand>
        <name>Ca(2+)</name>
        <dbReference type="ChEBI" id="CHEBI:29108"/>
        <label>1</label>
    </ligand>
</feature>
<feature type="binding site" evidence="1">
    <location>
        <position position="219"/>
    </location>
    <ligand>
        <name>Ca(2+)</name>
        <dbReference type="ChEBI" id="CHEBI:29108"/>
        <label>2</label>
    </ligand>
</feature>
<feature type="binding site" evidence="1">
    <location>
        <position position="221"/>
    </location>
    <ligand>
        <name>Ca(2+)</name>
        <dbReference type="ChEBI" id="CHEBI:29108"/>
        <label>1</label>
    </ligand>
</feature>
<feature type="binding site" evidence="1">
    <location>
        <position position="221"/>
    </location>
    <ligand>
        <name>Ca(2+)</name>
        <dbReference type="ChEBI" id="CHEBI:29108"/>
        <label>2</label>
    </ligand>
</feature>
<feature type="binding site" evidence="1">
    <location>
        <position position="255"/>
    </location>
    <ligand>
        <name>Ca(2+)</name>
        <dbReference type="ChEBI" id="CHEBI:29108"/>
        <label>2</label>
    </ligand>
</feature>
<feature type="binding site" evidence="1">
    <location>
        <position position="256"/>
    </location>
    <ligand>
        <name>Ca(2+)</name>
        <dbReference type="ChEBI" id="CHEBI:29108"/>
        <label>1</label>
    </ligand>
</feature>
<feature type="binding site" evidence="1">
    <location>
        <position position="256"/>
    </location>
    <ligand>
        <name>Ca(2+)</name>
        <dbReference type="ChEBI" id="CHEBI:29108"/>
        <label>2</label>
    </ligand>
</feature>
<feature type="binding site" evidence="1">
    <location>
        <position position="269"/>
    </location>
    <ligand>
        <name>Ca(2+)</name>
        <dbReference type="ChEBI" id="CHEBI:29108"/>
        <label>2</label>
    </ligand>
</feature>
<feature type="binding site" evidence="1">
    <location>
        <position position="317"/>
    </location>
    <ligand>
        <name>cyanocob(III)alamin</name>
        <dbReference type="ChEBI" id="CHEBI:17439"/>
    </ligand>
</feature>
<feature type="binding site" evidence="1">
    <location>
        <position position="528"/>
    </location>
    <ligand>
        <name>cyanocob(III)alamin</name>
        <dbReference type="ChEBI" id="CHEBI:17439"/>
    </ligand>
</feature>
<feature type="binding site" evidence="1">
    <location>
        <position position="562"/>
    </location>
    <ligand>
        <name>cyanocob(III)alamin</name>
        <dbReference type="ChEBI" id="CHEBI:17439"/>
    </ligand>
</feature>
<comment type="function">
    <text evidence="1">Involved in the active translocation of vitamin B12 (cyanocobalamin) across the outer membrane to the periplasmic space. It derives its energy for transport by interacting with the trans-periplasmic membrane protein TonB.</text>
</comment>
<comment type="subcellular location">
    <subcellularLocation>
        <location evidence="1">Cell outer membrane</location>
        <topology evidence="1">Multi-pass membrane protein</topology>
    </subcellularLocation>
</comment>
<comment type="similarity">
    <text evidence="1">Belongs to the TonB-dependent receptor family. BtuB (TC 1.B.14.3.1) subfamily.</text>
</comment>
<comment type="sequence caution" evidence="3">
    <conflict type="erroneous initiation">
        <sequence resource="EMBL-CDS" id="ABG16390"/>
    </conflict>
</comment>
<evidence type="ECO:0000255" key="1">
    <source>
        <dbReference type="HAMAP-Rule" id="MF_01531"/>
    </source>
</evidence>
<evidence type="ECO:0000255" key="2">
    <source>
        <dbReference type="PROSITE-ProRule" id="PRU01360"/>
    </source>
</evidence>
<evidence type="ECO:0000305" key="3"/>
<proteinExistence type="inferred from homology"/>
<sequence length="625" mass="69808">MTIKKYTLLTALSVTAFSGWAQGNNTTDNNDEMVVTANRFPQPKSSVLAPVDVVTRADIDRWQSTNINDVLRRLPGVDIAQDGGMGQRSSLFIRGTNSSHVLVLIDGVRLNQAGITGASDLSQIPISLVQRIEYIRGPRSAVYGSDAIGGVINILTGRDKPGTTLSAGLGSNGYQTYDGSTQQKLGEDTTVTLAGNYTYSKGYDVVAGMPGAGGPRQPDRDGFMGKMLWAGLEHQFNEQFNGFARVYGFDNRSDYDGYTNYSNPLALIDTRKLSSRTYDTGLRYKNGIYASQFIASYNRTKDYNYSPLFGQHDITASLDEAEQYNLQWGNTFQLTNGMISAGADWQEQRTERKSSNQNTTADFTQHNTGIYLTGQQQISDVTLEGAVRSDDNSQFGWHSTWQTSAGWEFIDGYRLIGSYGTAYKAPNLMQLYSAYGGNANLKPEESKQWEGGVEGLTGPLTWRLSAYRNDIDQLIDYSNLTNGYFNINKATIKGVEWTGSFDTGPLSHQVTLEYLDPRNADTHEILVRRAKQQVKYQLDWQVADLDWSVTYQYLGQRYDKDYSTYPEETVELGGVSLWDLAVSYPVTSHLTVRGRIANLFDKDYEMVYGYQTPGREYYFTGSYNF</sequence>